<comment type="function">
    <text evidence="1">GTPase-activating protein (GAP) for ADP ribosylation factor 1 (ARF1). Hydrolysis of ARF1-bound GTP may lead to dissociation of coatomer from Golgi-derived membranes to allow fusion with target membranes (By similarity).</text>
</comment>
<comment type="activity regulation">
    <text evidence="1">GAP activity stimulated by phosphatidylinositol 4,5-bisphosphate (PIP2).</text>
</comment>
<comment type="subcellular location">
    <subcellularLocation>
        <location evidence="1">Cytoplasm</location>
    </subcellularLocation>
    <subcellularLocation>
        <location evidence="1">Golgi apparatus membrane</location>
        <topology evidence="1">Peripheral membrane protein</topology>
        <orientation evidence="1">Cytoplasmic side</orientation>
    </subcellularLocation>
    <text evidence="1">Also found on peripheral punctate structures likely to be endoplasmic reticulum-Golgi intermediate compartment.</text>
</comment>
<sequence length="516" mass="56823">MGDPSKQDILTIFKRLRSVPTNKVCFDCGAKNPSWASITYGVFLCIDCSGSHRSLGVHLSFIRSTELDSNWSWFQLRCMQVGGNANASSFFHQHGCSTSDTNAKYNSRAAQLYREKIKSLASQATRKHGTDLWLDSCVVPPLSPPPKEEDFFASHVSPEVSDTAWASAIAEPSSLTSRPVETTLENNEGGQEQGPSVEGLNVPSKAALEVSSIIKKKPNQAKKGLGAKKGSLGAQKLANTCFNEIEKQAQAADKMKEQEDLAKAAPKEESIVSSLRLAYKDLEIQMKKDEKLNISGKKNVDSDRLGMGFGNCRSGISHSVTSDMQTIEQESPIMAKPRKKYNDDSDDSYFTSSSRYFDEAVELRSSSFSSWDDSSDSYWKKETSKDTETILKTTGYSDRPTARRKPDYEPVENTDEAQKKFGNVKAISSDMYFGRQAQADYETRARLERLSASSSISSADLFEEQRKQAAGNYSLSNVLPSAPNMAQFKQGVRSVAGKLSVFANGVVTSIQDRYGS</sequence>
<accession>Q4R4C9</accession>
<organism>
    <name type="scientific">Macaca fascicularis</name>
    <name type="common">Crab-eating macaque</name>
    <name type="synonym">Cynomolgus monkey</name>
    <dbReference type="NCBI Taxonomy" id="9541"/>
    <lineage>
        <taxon>Eukaryota</taxon>
        <taxon>Metazoa</taxon>
        <taxon>Chordata</taxon>
        <taxon>Craniata</taxon>
        <taxon>Vertebrata</taxon>
        <taxon>Euteleostomi</taxon>
        <taxon>Mammalia</taxon>
        <taxon>Eutheria</taxon>
        <taxon>Euarchontoglires</taxon>
        <taxon>Primates</taxon>
        <taxon>Haplorrhini</taxon>
        <taxon>Catarrhini</taxon>
        <taxon>Cercopithecidae</taxon>
        <taxon>Cercopithecinae</taxon>
        <taxon>Macaca</taxon>
    </lineage>
</organism>
<evidence type="ECO:0000250" key="1">
    <source>
        <dbReference type="UniProtKB" id="Q9NP61"/>
    </source>
</evidence>
<evidence type="ECO:0000255" key="2"/>
<evidence type="ECO:0000255" key="3">
    <source>
        <dbReference type="PROSITE-ProRule" id="PRU00288"/>
    </source>
</evidence>
<evidence type="ECO:0000256" key="4">
    <source>
        <dbReference type="SAM" id="MobiDB-lite"/>
    </source>
</evidence>
<evidence type="ECO:0000312" key="5">
    <source>
        <dbReference type="EMBL" id="BAE02036.1"/>
    </source>
</evidence>
<dbReference type="EMBL" id="AB178985">
    <property type="protein sequence ID" value="BAE02036.1"/>
    <property type="molecule type" value="mRNA"/>
</dbReference>
<dbReference type="RefSeq" id="NP_001270363.1">
    <property type="nucleotide sequence ID" value="NM_001283434.1"/>
</dbReference>
<dbReference type="SMR" id="Q4R4C9"/>
<dbReference type="STRING" id="9541.ENSMFAP00000023389"/>
<dbReference type="eggNOG" id="KOG0706">
    <property type="taxonomic scope" value="Eukaryota"/>
</dbReference>
<dbReference type="Proteomes" id="UP000233100">
    <property type="component" value="Unplaced"/>
</dbReference>
<dbReference type="GO" id="GO:0000139">
    <property type="term" value="C:Golgi membrane"/>
    <property type="evidence" value="ECO:0007669"/>
    <property type="project" value="UniProtKB-SubCell"/>
</dbReference>
<dbReference type="GO" id="GO:0005096">
    <property type="term" value="F:GTPase activator activity"/>
    <property type="evidence" value="ECO:0007669"/>
    <property type="project" value="UniProtKB-KW"/>
</dbReference>
<dbReference type="GO" id="GO:0008270">
    <property type="term" value="F:zinc ion binding"/>
    <property type="evidence" value="ECO:0007669"/>
    <property type="project" value="UniProtKB-KW"/>
</dbReference>
<dbReference type="GO" id="GO:0048205">
    <property type="term" value="P:COPI coating of Golgi vesicle"/>
    <property type="evidence" value="ECO:0007669"/>
    <property type="project" value="TreeGrafter"/>
</dbReference>
<dbReference type="GO" id="GO:0015031">
    <property type="term" value="P:protein transport"/>
    <property type="evidence" value="ECO:0007669"/>
    <property type="project" value="UniProtKB-KW"/>
</dbReference>
<dbReference type="CDD" id="cd09028">
    <property type="entry name" value="ArfGap_ArfGap3"/>
    <property type="match status" value="1"/>
</dbReference>
<dbReference type="FunFam" id="1.10.220.150:FF:000004">
    <property type="entry name" value="Putative ADP-ribosylation factor GTPase-activating protein 2"/>
    <property type="match status" value="1"/>
</dbReference>
<dbReference type="Gene3D" id="1.10.220.150">
    <property type="entry name" value="Arf GTPase activating protein"/>
    <property type="match status" value="1"/>
</dbReference>
<dbReference type="InterPro" id="IPR037278">
    <property type="entry name" value="ARFGAP/RecO"/>
</dbReference>
<dbReference type="InterPro" id="IPR001164">
    <property type="entry name" value="ArfGAP_dom"/>
</dbReference>
<dbReference type="InterPro" id="IPR038508">
    <property type="entry name" value="ArfGAP_dom_sf"/>
</dbReference>
<dbReference type="PANTHER" id="PTHR45686">
    <property type="entry name" value="ADP-RIBOSYLATION FACTOR GTPASE ACTIVATING PROTEIN 3, ISOFORM H-RELATED"/>
    <property type="match status" value="1"/>
</dbReference>
<dbReference type="PANTHER" id="PTHR45686:SF1">
    <property type="entry name" value="ADP-RIBOSYLATION FACTOR GTPASE-ACTIVATING PROTEIN 3"/>
    <property type="match status" value="1"/>
</dbReference>
<dbReference type="Pfam" id="PF01412">
    <property type="entry name" value="ArfGap"/>
    <property type="match status" value="1"/>
</dbReference>
<dbReference type="PRINTS" id="PR00405">
    <property type="entry name" value="REVINTRACTNG"/>
</dbReference>
<dbReference type="SMART" id="SM00105">
    <property type="entry name" value="ArfGap"/>
    <property type="match status" value="1"/>
</dbReference>
<dbReference type="SUPFAM" id="SSF57863">
    <property type="entry name" value="ArfGap/RecO-like zinc finger"/>
    <property type="match status" value="1"/>
</dbReference>
<dbReference type="PROSITE" id="PS50115">
    <property type="entry name" value="ARFGAP"/>
    <property type="match status" value="1"/>
</dbReference>
<gene>
    <name evidence="1" type="primary">ARFGAP3</name>
    <name type="ORF">QtsA-10902</name>
</gene>
<proteinExistence type="evidence at transcript level"/>
<protein>
    <recommendedName>
        <fullName>ADP-ribosylation factor GTPase-activating protein 3</fullName>
        <shortName>ARF GAP 3</shortName>
    </recommendedName>
</protein>
<reference evidence="5" key="1">
    <citation type="submission" date="2005-06" db="EMBL/GenBank/DDBJ databases">
        <title>DNA sequences of macaque genes expressed in brain or testis and its evolutionary implications.</title>
        <authorList>
            <consortium name="International consortium for macaque cDNA sequencing and analysis"/>
        </authorList>
    </citation>
    <scope>NUCLEOTIDE SEQUENCE [LARGE SCALE MRNA]</scope>
    <source>
        <tissue>Testis</tissue>
    </source>
</reference>
<feature type="chain" id="PRO_0000314053" description="ADP-ribosylation factor GTPase-activating protein 3">
    <location>
        <begin position="1"/>
        <end position="516"/>
    </location>
</feature>
<feature type="domain" description="Arf-GAP" evidence="3">
    <location>
        <begin position="10"/>
        <end position="126"/>
    </location>
</feature>
<feature type="zinc finger region" description="C4-type" evidence="3">
    <location>
        <begin position="25"/>
        <end position="48"/>
    </location>
</feature>
<feature type="region of interest" description="Disordered" evidence="4">
    <location>
        <begin position="170"/>
        <end position="199"/>
    </location>
</feature>
<feature type="region of interest" description="Disordered" evidence="4">
    <location>
        <begin position="392"/>
        <end position="414"/>
    </location>
</feature>
<feature type="coiled-coil region" evidence="2">
    <location>
        <begin position="243"/>
        <end position="264"/>
    </location>
</feature>
<feature type="compositionally biased region" description="Polar residues" evidence="4">
    <location>
        <begin position="173"/>
        <end position="194"/>
    </location>
</feature>
<feature type="modified residue" description="Phosphoserine" evidence="1">
    <location>
        <position position="231"/>
    </location>
</feature>
<feature type="modified residue" description="Phosphoserine" evidence="1">
    <location>
        <position position="270"/>
    </location>
</feature>
<feature type="modified residue" description="Phosphoserine" evidence="1">
    <location>
        <position position="274"/>
    </location>
</feature>
<feature type="modified residue" description="Phosphoserine" evidence="1">
    <location>
        <position position="331"/>
    </location>
</feature>
<feature type="modified residue" description="Phosphoserine" evidence="1">
    <location>
        <position position="370"/>
    </location>
</feature>
<feature type="modified residue" description="Phosphoserine" evidence="1">
    <location>
        <position position="428"/>
    </location>
</feature>
<feature type="modified residue" description="Phosphoserine" evidence="1">
    <location>
        <position position="451"/>
    </location>
</feature>
<feature type="modified residue" description="Phosphoserine" evidence="1">
    <location>
        <position position="453"/>
    </location>
</feature>
<feature type="modified residue" description="Phosphoserine" evidence="1">
    <location>
        <position position="455"/>
    </location>
</feature>
<feature type="modified residue" description="Phosphoserine" evidence="1">
    <location>
        <position position="457"/>
    </location>
</feature>
<feature type="modified residue" description="Phosphoserine" evidence="1">
    <location>
        <position position="458"/>
    </location>
</feature>
<keyword id="KW-0175">Coiled coil</keyword>
<keyword id="KW-0963">Cytoplasm</keyword>
<keyword id="KW-0931">ER-Golgi transport</keyword>
<keyword id="KW-0333">Golgi apparatus</keyword>
<keyword id="KW-0343">GTPase activation</keyword>
<keyword id="KW-0472">Membrane</keyword>
<keyword id="KW-0479">Metal-binding</keyword>
<keyword id="KW-0597">Phosphoprotein</keyword>
<keyword id="KW-0653">Protein transport</keyword>
<keyword id="KW-1185">Reference proteome</keyword>
<keyword id="KW-0813">Transport</keyword>
<keyword id="KW-0862">Zinc</keyword>
<keyword id="KW-0863">Zinc-finger</keyword>
<name>ARFG3_MACFA</name>